<sequence length="261" mass="28795">MFEARLVQGSILKKVLEALKDLINEACWDISSGGVNLQSMDSSHVSLVQLTLRSEGFDTYRCDRNLAMGVNLTSMSKILKCAGNEDIITLRAEDNADTLALVFEAPNQEKVSDYEMKLMDLDVEQLGIPEQEYSCVVKMPSGEFARICRDLSHIGDAVVISCAKDGVKFSASGELGNGNIKLSQTSNVDKEEEAVTIEMNEPVQLTFALRYLNFFTKATPLSPTVTLSMSTDVPLVVEYKISDMGHLKYYLAPKIEDEEGS</sequence>
<accession>P57761</accession>
<gene>
    <name type="primary">PCNA</name>
</gene>
<evidence type="ECO:0000250" key="1">
    <source>
        <dbReference type="UniProtKB" id="P04961"/>
    </source>
</evidence>
<evidence type="ECO:0000250" key="2">
    <source>
        <dbReference type="UniProtKB" id="P12004"/>
    </source>
</evidence>
<evidence type="ECO:0000250" key="3">
    <source>
        <dbReference type="UniProtKB" id="P17918"/>
    </source>
</evidence>
<evidence type="ECO:0000255" key="4"/>
<evidence type="ECO:0000305" key="5"/>
<feature type="chain" id="PRO_0000149157" description="Proliferating cell nuclear antigen">
    <location>
        <begin position="1"/>
        <end position="261"/>
    </location>
</feature>
<feature type="DNA-binding region" evidence="4">
    <location>
        <begin position="61"/>
        <end position="80"/>
    </location>
</feature>
<feature type="modified residue" description="N6-acetyllysine" evidence="2">
    <location>
        <position position="14"/>
    </location>
</feature>
<feature type="modified residue" description="N6-acetyllysine" evidence="2">
    <location>
        <position position="77"/>
    </location>
</feature>
<feature type="modified residue" description="N6-acetyllysine" evidence="2">
    <location>
        <position position="80"/>
    </location>
</feature>
<feature type="modified residue" description="Phosphotyrosine; by EGFR" evidence="2">
    <location>
        <position position="211"/>
    </location>
</feature>
<feature type="modified residue" description="N6-acetyllysine" evidence="2">
    <location>
        <position position="248"/>
    </location>
</feature>
<feature type="disulfide bond" evidence="2">
    <location>
        <begin position="135"/>
        <end position="162"/>
    </location>
</feature>
<feature type="cross-link" description="Glycyl lysine isopeptide (Lys-Gly) (interchain with G-Cter in SUMO2); alternate" evidence="2">
    <location>
        <position position="164"/>
    </location>
</feature>
<feature type="cross-link" description="Glycyl lysine isopeptide (Lys-Gly) (interchain with G-Cter in ubiquitin); alternate" evidence="2">
    <location>
        <position position="164"/>
    </location>
</feature>
<feature type="cross-link" description="Glycyl lysine isopeptide (Lys-Gly) (interchain with G-Cter in SUMO2)" evidence="2">
    <location>
        <position position="254"/>
    </location>
</feature>
<keyword id="KW-0007">Acetylation</keyword>
<keyword id="KW-1015">Disulfide bond</keyword>
<keyword id="KW-0227">DNA damage</keyword>
<keyword id="KW-0234">DNA repair</keyword>
<keyword id="KW-0235">DNA replication</keyword>
<keyword id="KW-0238">DNA-binding</keyword>
<keyword id="KW-1017">Isopeptide bond</keyword>
<keyword id="KW-0488">Methylation</keyword>
<keyword id="KW-0539">Nucleus</keyword>
<keyword id="KW-0597">Phosphoprotein</keyword>
<keyword id="KW-0832">Ubl conjugation</keyword>
<proteinExistence type="evidence at protein level"/>
<name>PCNA_CRIGR</name>
<comment type="function">
    <text evidence="2">Auxiliary protein of DNA polymerase delta and epsilon, is involved in the control of eukaryotic DNA replication by increasing the polymerase's processibility during elongation of the leading strand. Induces a robust stimulatory effect on the 3'-5' exonuclease and 3'-phosphodiesterase, but not apurinic-apyrimidinic (AP) endonuclease, APEX2 activities. Has to be loaded onto DNA in order to be able to stimulate APEX2. Plays a key role in DNA damage response (DDR) by being conveniently positioned at the replication fork to coordinate DNA replication with DNA repair and DNA damage tolerance pathways. Acts as a loading platform to recruit DDR proteins that allow completion of DNA replication after DNA damage and promote postreplication repair: Monoubiquitinated PCNA leads to recruitment of translesion (TLS) polymerases, while 'Lys-63'-linked polyubiquitination of PCNA is involved in error-free pathway and employs recombination mechanisms to synthesize across the lesion (By similarity).</text>
</comment>
<comment type="subunit">
    <text evidence="1 2 3">Homotrimer. Interacts with p300/EP300; the interaction occurs on chromatin in UV-irradiated damaged cells. Interacts with CREBBP (via transactivation domain and C-terminus); the interaction occurs on chromatin in UV-irradiated damaged cells. Directly interacts with POLD1, POLD3 and POLD4 subunits of the DNA polymerase delta complex, POLD3 being the major interacting partner; the interaction with POLD3 is inhibited by CDKN1A/p21(CIP1). Forms a complex with activator 1 heteropentamer in the presence of ATP. Interacts with EXO1, POLH, POLK, DNMT1, ERCC5, FEN1, CDC6 and POLDIP2. Interacts with POLB (By similarity). Interacts with APEX2; this interaction is triggered by reactive oxygen species and increased by misincorporation of uracil in nuclear DNA. Forms a ternary complex with DNTTIP2 and core histone (By similarity). Interacts with KCTD10 and PPP1R15A (By similarity). Interacts with SMARCA5/SNF2H (By similarity). Interacts with BAZ1B/WSTF; the interaction is direct and is required for BAZ1B/WSTF binding to replication foci during S phase (By similarity). Interacts with HLTF and SHPRH. Interacts with NUDT15; this interaction is disrupted in response to UV irradiation and acetylation. Interacts with CDKN1A/p21(CIP1) and CDT1; interacts via their PIP-box which also recruits the DCX(DTL) complex. The interaction with CDKN1A inhibits POLD3 binding. Interacts with DDX11. Interacts with EGFR; positively regulates PCNA. Interacts with PARPBP. Interacts (when ubiquitinated) with SPRTN; leading to enhance RAD18-mediated PCNA ubiquitination. Interacts (when polyubiquitinated) with ZRANB3. Interacts with SMARCAD1. Interacts with CDKN1C. Interacts with PCLAF (via PIP-box). Interacts with RTEL1 (via PIP-box); the interaction is direct and essential for the suppression of telomere fragility. Interacts with FAM111A (via PIP-box); the interaction is direct and required for PCNA loading on chromatin binding. Interacts with LIG1. Interacts with SETMAR. Interacts with ANKRD17. Interacts with FBXO18/FBH1 (via PIP-box); the interaction recruits the DCX(DTL) complex and promotes ubiquitination and degradation of FBXO18/FBH1. Interacts with POLN (By similarity). Interacts with SDE2 (via PIP-box); the interaction is direct and prevents ultraviolet light induced monoubiquitination (By similarity). Component of the replisome complex composed of at least DONSON, MCM2, MCM7, PCNA and TICRR; interaction at least with PCNA occurs during DNA replication (By similarity). Interacts with MAPK15; the interaction is chromatin binding dependent and prevents MDM2-mediated PCNA destruction by inhibiting the association of PCNA with MDM2. Interacts with PARP10 (via PIP-box) (By similarity). Interacts with DDI2 (By similarity). Interacts with HMCES (via PIP-box) (By similarity). Interacts with TRAIP (via PIP-box) (By similarity). Interacts with UHRF2 (By similarity). Interacts with ALKBH2; this interaction is enhanced during the S-phase of the cell cycle. Interacts with ATAD5; the interaction promotes USP1-mediated PCNA deubiquitination (By similarity). Interacts (when phosphorylated) with GRB2 (By similarity). Interacts with ANG (By similarity). Interacts with nuclear UNG; this interaction mediates UNG recruitment to S-phase replication foci. Interacts with ERCC6L2 (via an atypical PIP-box); this interaction facilitates cenrtomeric localization of ERCC6L2 (By similarity).</text>
</comment>
<comment type="interaction">
    <interactant intactId="EBI-1202742">
        <id>P57761</id>
    </interactant>
    <interactant intactId="EBI-1202742">
        <id>P57761</id>
        <label>PCNA</label>
    </interactant>
    <organismsDiffer>false</organismsDiffer>
    <experiments>2</experiments>
</comment>
<comment type="subcellular location">
    <subcellularLocation>
        <location evidence="2">Nucleus</location>
    </subcellularLocation>
    <text evidence="2">Forms nuclear foci representing sites of ongoing DNA replication and vary in morphology and number during S phase. Together with APEX2, is redistributed in discrete nuclear foci in presence of oxidative DNA damaging agents. Colocalizes with CREBBP, EP300 and POLD1 to sites of DNA damage (By similarity).</text>
</comment>
<comment type="PTM">
    <text evidence="2">Phosphorylated. Phosphorylation at Tyr-211 by EGFR stabilizes chromatin-associated PCNA (By similarity).</text>
</comment>
<comment type="PTM">
    <text evidence="2">Acetylated by CREBBP and p300/EP300; preferentially acetylated by CREBBP on Lys-80, Lys-13 and Lys-14 and on Lys-77 by p300/EP300 upon loading on chromatin in response to UV irradiation. Lysine acetylation disrupts association with chromatin, hence promoting PCNA ubiquitination and proteasomal degradation in response to UV damage in a CREBBP- and EP300-dependent manner. Acetylation disrupts interaction with NUDT15 and promotes degradation (By similarity).</text>
</comment>
<comment type="PTM">
    <text evidence="2">Ubiquitinated. Following DNA damage, can be either monoubiquitinated to stimulate direct bypass of DNA lesions by specialized DNA polymerases or polyubiquitinated to promote recombination-dependent DNA synthesis across DNA lesions by template switching mechanisms. Following induction of replication stress, monoubiquitinated by the UBE2B-RAD18 complex on Lys-164, leading to recruit translesion (TLS) polymerases, which are able to synthesize across DNA lesions in a potentially error-prone manner. An error-free pathway also exists and requires non-canonical polyubiquitination on Lys-164 through 'Lys-63' linkage of ubiquitin moieties by the E2 complex UBE2N-UBE2V2 and the E3 ligases, HLTF, RNF8 and SHPRH. This error-free pathway, also known as template switching, employs recombination mechanisms to synthesize across the lesion, using as a template the undamaged, newly synthesized strand of the sister chromatid. Monoubiquitination at Lys-164 also takes place in undamaged proliferating cells, and is mediated by the DCX(DTL) complex, leading to enhance PCNA-dependent translesion DNA synthesis. Sumoylated during S phase (By similarity).</text>
</comment>
<comment type="PTM">
    <text evidence="2">Methylated on glutamate residues by ARMT1.</text>
</comment>
<comment type="similarity">
    <text evidence="5">Belongs to the PCNA family.</text>
</comment>
<organism>
    <name type="scientific">Cricetulus griseus</name>
    <name type="common">Chinese hamster</name>
    <name type="synonym">Cricetulus barabensis griseus</name>
    <dbReference type="NCBI Taxonomy" id="10029"/>
    <lineage>
        <taxon>Eukaryota</taxon>
        <taxon>Metazoa</taxon>
        <taxon>Chordata</taxon>
        <taxon>Craniata</taxon>
        <taxon>Vertebrata</taxon>
        <taxon>Euteleostomi</taxon>
        <taxon>Mammalia</taxon>
        <taxon>Eutheria</taxon>
        <taxon>Euarchontoglires</taxon>
        <taxon>Glires</taxon>
        <taxon>Rodentia</taxon>
        <taxon>Myomorpha</taxon>
        <taxon>Muroidea</taxon>
        <taxon>Cricetidae</taxon>
        <taxon>Cricetinae</taxon>
        <taxon>Cricetulus</taxon>
    </lineage>
</organism>
<dbReference type="EMBL" id="AF294427">
    <property type="protein sequence ID" value="AAG10077.1"/>
    <property type="molecule type" value="mRNA"/>
</dbReference>
<dbReference type="RefSeq" id="NP_001233697.1">
    <property type="nucleotide sequence ID" value="NM_001246768.1"/>
</dbReference>
<dbReference type="BMRB" id="P57761"/>
<dbReference type="SMR" id="P57761"/>
<dbReference type="PaxDb" id="10029-NP_001233697.1"/>
<dbReference type="Ensembl" id="ENSCGRT00001031625.1">
    <property type="protein sequence ID" value="ENSCGRP00001027378.1"/>
    <property type="gene ID" value="ENSCGRG00001024400.1"/>
</dbReference>
<dbReference type="GeneID" id="100689335"/>
<dbReference type="KEGG" id="cge:100689335"/>
<dbReference type="CTD" id="5111"/>
<dbReference type="eggNOG" id="KOG1636">
    <property type="taxonomic scope" value="Eukaryota"/>
</dbReference>
<dbReference type="GeneTree" id="ENSGT00390000004965"/>
<dbReference type="OMA" id="EMKLINM"/>
<dbReference type="OrthoDB" id="534348at2759"/>
<dbReference type="Proteomes" id="UP000694386">
    <property type="component" value="Unplaced"/>
</dbReference>
<dbReference type="Proteomes" id="UP001108280">
    <property type="component" value="Chromosome 6"/>
</dbReference>
<dbReference type="GO" id="GO:0005813">
    <property type="term" value="C:centrosome"/>
    <property type="evidence" value="ECO:0007669"/>
    <property type="project" value="Ensembl"/>
</dbReference>
<dbReference type="GO" id="GO:0000785">
    <property type="term" value="C:chromatin"/>
    <property type="evidence" value="ECO:0000250"/>
    <property type="project" value="UniProtKB"/>
</dbReference>
<dbReference type="GO" id="GO:0000307">
    <property type="term" value="C:cyclin-dependent protein kinase holoenzyme complex"/>
    <property type="evidence" value="ECO:0007669"/>
    <property type="project" value="Ensembl"/>
</dbReference>
<dbReference type="GO" id="GO:0001673">
    <property type="term" value="C:male germ cell nucleus"/>
    <property type="evidence" value="ECO:0007669"/>
    <property type="project" value="Ensembl"/>
</dbReference>
<dbReference type="GO" id="GO:0016604">
    <property type="term" value="C:nuclear body"/>
    <property type="evidence" value="ECO:0007669"/>
    <property type="project" value="Ensembl"/>
</dbReference>
<dbReference type="GO" id="GO:0005652">
    <property type="term" value="C:nuclear lamina"/>
    <property type="evidence" value="ECO:0007669"/>
    <property type="project" value="Ensembl"/>
</dbReference>
<dbReference type="GO" id="GO:0043596">
    <property type="term" value="C:nuclear replication fork"/>
    <property type="evidence" value="ECO:0007669"/>
    <property type="project" value="Ensembl"/>
</dbReference>
<dbReference type="GO" id="GO:0043626">
    <property type="term" value="C:PCNA complex"/>
    <property type="evidence" value="ECO:0007669"/>
    <property type="project" value="Ensembl"/>
</dbReference>
<dbReference type="GO" id="GO:0070557">
    <property type="term" value="C:PCNA-p21 complex"/>
    <property type="evidence" value="ECO:0000250"/>
    <property type="project" value="UniProtKB"/>
</dbReference>
<dbReference type="GO" id="GO:0003682">
    <property type="term" value="F:chromatin binding"/>
    <property type="evidence" value="ECO:0000250"/>
    <property type="project" value="UniProtKB"/>
</dbReference>
<dbReference type="GO" id="GO:0003684">
    <property type="term" value="F:damaged DNA binding"/>
    <property type="evidence" value="ECO:0007669"/>
    <property type="project" value="Ensembl"/>
</dbReference>
<dbReference type="GO" id="GO:0032139">
    <property type="term" value="F:dinucleotide insertion or deletion binding"/>
    <property type="evidence" value="ECO:0007669"/>
    <property type="project" value="Ensembl"/>
</dbReference>
<dbReference type="GO" id="GO:0070182">
    <property type="term" value="F:DNA polymerase binding"/>
    <property type="evidence" value="ECO:0007669"/>
    <property type="project" value="Ensembl"/>
</dbReference>
<dbReference type="GO" id="GO:0030337">
    <property type="term" value="F:DNA polymerase processivity factor activity"/>
    <property type="evidence" value="ECO:0007669"/>
    <property type="project" value="InterPro"/>
</dbReference>
<dbReference type="GO" id="GO:0035035">
    <property type="term" value="F:histone acetyltransferase binding"/>
    <property type="evidence" value="ECO:0007669"/>
    <property type="project" value="Ensembl"/>
</dbReference>
<dbReference type="GO" id="GO:0042802">
    <property type="term" value="F:identical protein binding"/>
    <property type="evidence" value="ECO:0000353"/>
    <property type="project" value="IntAct"/>
</dbReference>
<dbReference type="GO" id="GO:0032405">
    <property type="term" value="F:MutLalpha complex binding"/>
    <property type="evidence" value="ECO:0007669"/>
    <property type="project" value="Ensembl"/>
</dbReference>
<dbReference type="GO" id="GO:0000701">
    <property type="term" value="F:purine-specific mismatch base pair DNA N-glycosylase activity"/>
    <property type="evidence" value="ECO:0007669"/>
    <property type="project" value="Ensembl"/>
</dbReference>
<dbReference type="GO" id="GO:0030971">
    <property type="term" value="F:receptor tyrosine kinase binding"/>
    <property type="evidence" value="ECO:0007669"/>
    <property type="project" value="Ensembl"/>
</dbReference>
<dbReference type="GO" id="GO:0006287">
    <property type="term" value="P:base-excision repair, gap-filling"/>
    <property type="evidence" value="ECO:0007669"/>
    <property type="project" value="Ensembl"/>
</dbReference>
<dbReference type="GO" id="GO:0034644">
    <property type="term" value="P:cellular response to UV"/>
    <property type="evidence" value="ECO:0007669"/>
    <property type="project" value="Ensembl"/>
</dbReference>
<dbReference type="GO" id="GO:0071466">
    <property type="term" value="P:cellular response to xenobiotic stimulus"/>
    <property type="evidence" value="ECO:0007669"/>
    <property type="project" value="Ensembl"/>
</dbReference>
<dbReference type="GO" id="GO:0030855">
    <property type="term" value="P:epithelial cell differentiation"/>
    <property type="evidence" value="ECO:0007669"/>
    <property type="project" value="Ensembl"/>
</dbReference>
<dbReference type="GO" id="GO:0006272">
    <property type="term" value="P:leading strand elongation"/>
    <property type="evidence" value="ECO:0007669"/>
    <property type="project" value="TreeGrafter"/>
</dbReference>
<dbReference type="GO" id="GO:0006298">
    <property type="term" value="P:mismatch repair"/>
    <property type="evidence" value="ECO:0007669"/>
    <property type="project" value="Ensembl"/>
</dbReference>
<dbReference type="GO" id="GO:1902990">
    <property type="term" value="P:mitotic telomere maintenance via semi-conservative replication"/>
    <property type="evidence" value="ECO:0007669"/>
    <property type="project" value="Ensembl"/>
</dbReference>
<dbReference type="GO" id="GO:0000122">
    <property type="term" value="P:negative regulation of transcription by RNA polymerase II"/>
    <property type="evidence" value="ECO:0007669"/>
    <property type="project" value="Ensembl"/>
</dbReference>
<dbReference type="GO" id="GO:0032077">
    <property type="term" value="P:positive regulation of deoxyribonuclease activity"/>
    <property type="evidence" value="ECO:0000250"/>
    <property type="project" value="UniProtKB"/>
</dbReference>
<dbReference type="GO" id="GO:0045739">
    <property type="term" value="P:positive regulation of DNA repair"/>
    <property type="evidence" value="ECO:0007669"/>
    <property type="project" value="Ensembl"/>
</dbReference>
<dbReference type="GO" id="GO:0045740">
    <property type="term" value="P:positive regulation of DNA replication"/>
    <property type="evidence" value="ECO:0007669"/>
    <property type="project" value="Ensembl"/>
</dbReference>
<dbReference type="GO" id="GO:0031297">
    <property type="term" value="P:replication fork processing"/>
    <property type="evidence" value="ECO:0007669"/>
    <property type="project" value="Ensembl"/>
</dbReference>
<dbReference type="GO" id="GO:0019985">
    <property type="term" value="P:translesion synthesis"/>
    <property type="evidence" value="ECO:0000250"/>
    <property type="project" value="UniProtKB"/>
</dbReference>
<dbReference type="CDD" id="cd00577">
    <property type="entry name" value="PCNA"/>
    <property type="match status" value="1"/>
</dbReference>
<dbReference type="FunFam" id="3.10.150.10:FF:000006">
    <property type="entry name" value="Proliferating cell nuclear antigen"/>
    <property type="match status" value="1"/>
</dbReference>
<dbReference type="FunFam" id="3.10.150.10:FF:000008">
    <property type="entry name" value="Proliferating cell nuclear antigen"/>
    <property type="match status" value="1"/>
</dbReference>
<dbReference type="FunFam" id="3.70.10.10:FF:000001">
    <property type="entry name" value="Proliferating cell nuclear antigen"/>
    <property type="match status" value="1"/>
</dbReference>
<dbReference type="Gene3D" id="3.70.10.10">
    <property type="match status" value="1"/>
</dbReference>
<dbReference type="HAMAP" id="MF_00317">
    <property type="entry name" value="DNApol_clamp_arch"/>
    <property type="match status" value="1"/>
</dbReference>
<dbReference type="InterPro" id="IPR046938">
    <property type="entry name" value="DNA_clamp_sf"/>
</dbReference>
<dbReference type="InterPro" id="IPR000730">
    <property type="entry name" value="Pr_cel_nuc_antig"/>
</dbReference>
<dbReference type="InterPro" id="IPR022649">
    <property type="entry name" value="Pr_cel_nuc_antig_C"/>
</dbReference>
<dbReference type="InterPro" id="IPR022659">
    <property type="entry name" value="Pr_cel_nuc_antig_CS"/>
</dbReference>
<dbReference type="InterPro" id="IPR022648">
    <property type="entry name" value="Pr_cel_nuc_antig_N"/>
</dbReference>
<dbReference type="NCBIfam" id="TIGR00590">
    <property type="entry name" value="pcna"/>
    <property type="match status" value="1"/>
</dbReference>
<dbReference type="PANTHER" id="PTHR11352">
    <property type="entry name" value="PROLIFERATING CELL NUCLEAR ANTIGEN"/>
    <property type="match status" value="1"/>
</dbReference>
<dbReference type="PANTHER" id="PTHR11352:SF0">
    <property type="entry name" value="PROLIFERATING CELL NUCLEAR ANTIGEN"/>
    <property type="match status" value="1"/>
</dbReference>
<dbReference type="Pfam" id="PF02747">
    <property type="entry name" value="PCNA_C"/>
    <property type="match status" value="1"/>
</dbReference>
<dbReference type="Pfam" id="PF00705">
    <property type="entry name" value="PCNA_N"/>
    <property type="match status" value="1"/>
</dbReference>
<dbReference type="PRINTS" id="PR00339">
    <property type="entry name" value="PCNACYCLIN"/>
</dbReference>
<dbReference type="SUPFAM" id="SSF55979">
    <property type="entry name" value="DNA clamp"/>
    <property type="match status" value="2"/>
</dbReference>
<dbReference type="PROSITE" id="PS01251">
    <property type="entry name" value="PCNA_1"/>
    <property type="match status" value="1"/>
</dbReference>
<dbReference type="PROSITE" id="PS00293">
    <property type="entry name" value="PCNA_2"/>
    <property type="match status" value="1"/>
</dbReference>
<reference key="1">
    <citation type="submission" date="2000-08" db="EMBL/GenBank/DDBJ databases">
        <title>Molecular cloning and characterization of cDNA coding for CHO proliferating cell nuclear antigen.</title>
        <authorList>
            <person name="Taylor K.N."/>
            <person name="Mishra N.C."/>
        </authorList>
    </citation>
    <scope>NUCLEOTIDE SEQUENCE [MRNA]</scope>
</reference>
<protein>
    <recommendedName>
        <fullName>Proliferating cell nuclear antigen</fullName>
        <shortName>PCNA</shortName>
    </recommendedName>
</protein>